<protein>
    <recommendedName>
        <fullName evidence="1">NADH-quinone oxidoreductase subunit I</fullName>
        <ecNumber evidence="1">7.1.1.-</ecNumber>
    </recommendedName>
    <alternativeName>
        <fullName evidence="1">NADH dehydrogenase I subunit I</fullName>
    </alternativeName>
    <alternativeName>
        <fullName evidence="1">NDH-1 subunit I</fullName>
    </alternativeName>
</protein>
<sequence length="162" mass="18862">MRNITNFLKTFLLWELLKGLKVTGKHFFTRKVTVQYPDEKTPISNRFRGLHALRRYENGEERCIACKLCEVVCPALAITINSTEREDGTRRTSSYEMDLFKCIFCGYCEESCPVDSIVETNILEYHFEERGENIMTKAKLLAIGDKYEAQIAADRLQDKDFR</sequence>
<reference key="1">
    <citation type="journal article" date="2009" name="PLoS Pathog.">
        <title>Molecular evolutionary consequences of niche restriction in Francisella tularensis, a facultative intracellular pathogen.</title>
        <authorList>
            <person name="Larsson P."/>
            <person name="Elfsmark D."/>
            <person name="Svensson K."/>
            <person name="Wikstroem P."/>
            <person name="Forsman M."/>
            <person name="Brettin T."/>
            <person name="Keim P."/>
            <person name="Johansson A."/>
        </authorList>
    </citation>
    <scope>NUCLEOTIDE SEQUENCE [LARGE SCALE GENOMIC DNA]</scope>
    <source>
        <strain>FSC147</strain>
    </source>
</reference>
<accession>B2SEV7</accession>
<organism>
    <name type="scientific">Francisella tularensis subsp. mediasiatica (strain FSC147)</name>
    <dbReference type="NCBI Taxonomy" id="441952"/>
    <lineage>
        <taxon>Bacteria</taxon>
        <taxon>Pseudomonadati</taxon>
        <taxon>Pseudomonadota</taxon>
        <taxon>Gammaproteobacteria</taxon>
        <taxon>Thiotrichales</taxon>
        <taxon>Francisellaceae</taxon>
        <taxon>Francisella</taxon>
    </lineage>
</organism>
<feature type="chain" id="PRO_1000143645" description="NADH-quinone oxidoreductase subunit I">
    <location>
        <begin position="1"/>
        <end position="162"/>
    </location>
</feature>
<feature type="domain" description="4Fe-4S ferredoxin-type 1" evidence="1">
    <location>
        <begin position="54"/>
        <end position="83"/>
    </location>
</feature>
<feature type="domain" description="4Fe-4S ferredoxin-type 2" evidence="1">
    <location>
        <begin position="93"/>
        <end position="122"/>
    </location>
</feature>
<feature type="binding site" evidence="1">
    <location>
        <position position="63"/>
    </location>
    <ligand>
        <name>[4Fe-4S] cluster</name>
        <dbReference type="ChEBI" id="CHEBI:49883"/>
        <label>1</label>
    </ligand>
</feature>
<feature type="binding site" evidence="1">
    <location>
        <position position="66"/>
    </location>
    <ligand>
        <name>[4Fe-4S] cluster</name>
        <dbReference type="ChEBI" id="CHEBI:49883"/>
        <label>1</label>
    </ligand>
</feature>
<feature type="binding site" evidence="1">
    <location>
        <position position="69"/>
    </location>
    <ligand>
        <name>[4Fe-4S] cluster</name>
        <dbReference type="ChEBI" id="CHEBI:49883"/>
        <label>1</label>
    </ligand>
</feature>
<feature type="binding site" evidence="1">
    <location>
        <position position="73"/>
    </location>
    <ligand>
        <name>[4Fe-4S] cluster</name>
        <dbReference type="ChEBI" id="CHEBI:49883"/>
        <label>2</label>
    </ligand>
</feature>
<feature type="binding site" evidence="1">
    <location>
        <position position="102"/>
    </location>
    <ligand>
        <name>[4Fe-4S] cluster</name>
        <dbReference type="ChEBI" id="CHEBI:49883"/>
        <label>2</label>
    </ligand>
</feature>
<feature type="binding site" evidence="1">
    <location>
        <position position="105"/>
    </location>
    <ligand>
        <name>[4Fe-4S] cluster</name>
        <dbReference type="ChEBI" id="CHEBI:49883"/>
        <label>2</label>
    </ligand>
</feature>
<feature type="binding site" evidence="1">
    <location>
        <position position="108"/>
    </location>
    <ligand>
        <name>[4Fe-4S] cluster</name>
        <dbReference type="ChEBI" id="CHEBI:49883"/>
        <label>2</label>
    </ligand>
</feature>
<feature type="binding site" evidence="1">
    <location>
        <position position="112"/>
    </location>
    <ligand>
        <name>[4Fe-4S] cluster</name>
        <dbReference type="ChEBI" id="CHEBI:49883"/>
        <label>1</label>
    </ligand>
</feature>
<proteinExistence type="inferred from homology"/>
<dbReference type="EC" id="7.1.1.-" evidence="1"/>
<dbReference type="EMBL" id="CP000915">
    <property type="protein sequence ID" value="ACD30202.1"/>
    <property type="molecule type" value="Genomic_DNA"/>
</dbReference>
<dbReference type="SMR" id="B2SEV7"/>
<dbReference type="KEGG" id="ftm:FTM_0102"/>
<dbReference type="HOGENOM" id="CLU_067218_5_1_6"/>
<dbReference type="GO" id="GO:0005886">
    <property type="term" value="C:plasma membrane"/>
    <property type="evidence" value="ECO:0007669"/>
    <property type="project" value="UniProtKB-SubCell"/>
</dbReference>
<dbReference type="GO" id="GO:0051539">
    <property type="term" value="F:4 iron, 4 sulfur cluster binding"/>
    <property type="evidence" value="ECO:0007669"/>
    <property type="project" value="UniProtKB-KW"/>
</dbReference>
<dbReference type="GO" id="GO:0005506">
    <property type="term" value="F:iron ion binding"/>
    <property type="evidence" value="ECO:0007669"/>
    <property type="project" value="UniProtKB-UniRule"/>
</dbReference>
<dbReference type="GO" id="GO:0050136">
    <property type="term" value="F:NADH:ubiquinone reductase (non-electrogenic) activity"/>
    <property type="evidence" value="ECO:0007669"/>
    <property type="project" value="UniProtKB-UniRule"/>
</dbReference>
<dbReference type="GO" id="GO:0048038">
    <property type="term" value="F:quinone binding"/>
    <property type="evidence" value="ECO:0007669"/>
    <property type="project" value="UniProtKB-KW"/>
</dbReference>
<dbReference type="GO" id="GO:0009060">
    <property type="term" value="P:aerobic respiration"/>
    <property type="evidence" value="ECO:0007669"/>
    <property type="project" value="TreeGrafter"/>
</dbReference>
<dbReference type="FunFam" id="3.30.70.3270:FF:000003">
    <property type="entry name" value="NADH-quinone oxidoreductase subunit I"/>
    <property type="match status" value="1"/>
</dbReference>
<dbReference type="Gene3D" id="3.30.70.3270">
    <property type="match status" value="1"/>
</dbReference>
<dbReference type="HAMAP" id="MF_01351">
    <property type="entry name" value="NDH1_NuoI"/>
    <property type="match status" value="1"/>
</dbReference>
<dbReference type="InterPro" id="IPR017896">
    <property type="entry name" value="4Fe4S_Fe-S-bd"/>
</dbReference>
<dbReference type="InterPro" id="IPR017900">
    <property type="entry name" value="4Fe4S_Fe_S_CS"/>
</dbReference>
<dbReference type="InterPro" id="IPR010226">
    <property type="entry name" value="NADH_quinone_OxRdtase_chainI"/>
</dbReference>
<dbReference type="NCBIfam" id="TIGR01971">
    <property type="entry name" value="NuoI"/>
    <property type="match status" value="1"/>
</dbReference>
<dbReference type="NCBIfam" id="NF004538">
    <property type="entry name" value="PRK05888.1-4"/>
    <property type="match status" value="1"/>
</dbReference>
<dbReference type="PANTHER" id="PTHR10849:SF20">
    <property type="entry name" value="NADH DEHYDROGENASE [UBIQUINONE] IRON-SULFUR PROTEIN 8, MITOCHONDRIAL"/>
    <property type="match status" value="1"/>
</dbReference>
<dbReference type="PANTHER" id="PTHR10849">
    <property type="entry name" value="NADH DEHYDROGENASE UBIQUINONE IRON-SULFUR PROTEIN 8, MITOCHONDRIAL"/>
    <property type="match status" value="1"/>
</dbReference>
<dbReference type="Pfam" id="PF12838">
    <property type="entry name" value="Fer4_7"/>
    <property type="match status" value="1"/>
</dbReference>
<dbReference type="SUPFAM" id="SSF54862">
    <property type="entry name" value="4Fe-4S ferredoxins"/>
    <property type="match status" value="1"/>
</dbReference>
<dbReference type="PROSITE" id="PS00198">
    <property type="entry name" value="4FE4S_FER_1"/>
    <property type="match status" value="2"/>
</dbReference>
<dbReference type="PROSITE" id="PS51379">
    <property type="entry name" value="4FE4S_FER_2"/>
    <property type="match status" value="2"/>
</dbReference>
<evidence type="ECO:0000255" key="1">
    <source>
        <dbReference type="HAMAP-Rule" id="MF_01351"/>
    </source>
</evidence>
<keyword id="KW-0004">4Fe-4S</keyword>
<keyword id="KW-0997">Cell inner membrane</keyword>
<keyword id="KW-1003">Cell membrane</keyword>
<keyword id="KW-0408">Iron</keyword>
<keyword id="KW-0411">Iron-sulfur</keyword>
<keyword id="KW-0472">Membrane</keyword>
<keyword id="KW-0479">Metal-binding</keyword>
<keyword id="KW-0520">NAD</keyword>
<keyword id="KW-0874">Quinone</keyword>
<keyword id="KW-0677">Repeat</keyword>
<keyword id="KW-1278">Translocase</keyword>
<keyword id="KW-0830">Ubiquinone</keyword>
<name>NUOI_FRATM</name>
<comment type="function">
    <text evidence="1">NDH-1 shuttles electrons from NADH, via FMN and iron-sulfur (Fe-S) centers, to quinones in the respiratory chain. The immediate electron acceptor for the enzyme in this species is believed to be ubiquinone. Couples the redox reaction to proton translocation (for every two electrons transferred, four hydrogen ions are translocated across the cytoplasmic membrane), and thus conserves the redox energy in a proton gradient.</text>
</comment>
<comment type="catalytic activity">
    <reaction evidence="1">
        <text>a quinone + NADH + 5 H(+)(in) = a quinol + NAD(+) + 4 H(+)(out)</text>
        <dbReference type="Rhea" id="RHEA:57888"/>
        <dbReference type="ChEBI" id="CHEBI:15378"/>
        <dbReference type="ChEBI" id="CHEBI:24646"/>
        <dbReference type="ChEBI" id="CHEBI:57540"/>
        <dbReference type="ChEBI" id="CHEBI:57945"/>
        <dbReference type="ChEBI" id="CHEBI:132124"/>
    </reaction>
</comment>
<comment type="cofactor">
    <cofactor evidence="1">
        <name>[4Fe-4S] cluster</name>
        <dbReference type="ChEBI" id="CHEBI:49883"/>
    </cofactor>
    <text evidence="1">Binds 2 [4Fe-4S] clusters per subunit.</text>
</comment>
<comment type="subunit">
    <text evidence="1">NDH-1 is composed of 14 different subunits. Subunits NuoA, H, J, K, L, M, N constitute the membrane sector of the complex.</text>
</comment>
<comment type="subcellular location">
    <subcellularLocation>
        <location evidence="1">Cell inner membrane</location>
        <topology evidence="1">Peripheral membrane protein</topology>
    </subcellularLocation>
</comment>
<comment type="similarity">
    <text evidence="1">Belongs to the complex I 23 kDa subunit family.</text>
</comment>
<gene>
    <name evidence="1" type="primary">nuoI</name>
    <name type="ordered locus">FTM_0102</name>
</gene>